<gene>
    <name evidence="1 9" type="primary">coaBC</name>
    <name evidence="8" type="synonym">dfp</name>
    <name type="ordered locus">b3639</name>
    <name type="ordered locus">JW5642</name>
</gene>
<comment type="function">
    <text evidence="2 3 4 5 6">Catalyzes two sequential steps in the biosynthesis of coenzyme A. In the first step cysteine is conjugated to 4'-phosphopantothenate to form 4-phosphopantothenoylcysteine (PubMed:11278255, PubMed:12140293, PubMed:14686929). In the second step the latter compound is decarboxylated to form 4'-phosphopantotheine (PubMed:10922366, PubMed:11358972).</text>
</comment>
<comment type="catalytic activity">
    <reaction evidence="1 2 4">
        <text>N-[(R)-4-phosphopantothenoyl]-L-cysteine + H(+) = (R)-4'-phosphopantetheine + CO2</text>
        <dbReference type="Rhea" id="RHEA:16793"/>
        <dbReference type="ChEBI" id="CHEBI:15378"/>
        <dbReference type="ChEBI" id="CHEBI:16526"/>
        <dbReference type="ChEBI" id="CHEBI:59458"/>
        <dbReference type="ChEBI" id="CHEBI:61723"/>
        <dbReference type="EC" id="4.1.1.36"/>
    </reaction>
</comment>
<comment type="catalytic activity">
    <reaction evidence="1 3 5 6">
        <text>(R)-4'-phosphopantothenate + L-cysteine + CTP = N-[(R)-4-phosphopantothenoyl]-L-cysteine + CMP + diphosphate + H(+)</text>
        <dbReference type="Rhea" id="RHEA:19397"/>
        <dbReference type="ChEBI" id="CHEBI:10986"/>
        <dbReference type="ChEBI" id="CHEBI:15378"/>
        <dbReference type="ChEBI" id="CHEBI:33019"/>
        <dbReference type="ChEBI" id="CHEBI:35235"/>
        <dbReference type="ChEBI" id="CHEBI:37563"/>
        <dbReference type="ChEBI" id="CHEBI:59458"/>
        <dbReference type="ChEBI" id="CHEBI:60377"/>
        <dbReference type="EC" id="6.3.2.5"/>
    </reaction>
</comment>
<comment type="cofactor">
    <cofactor evidence="1 3">
        <name>Mg(2+)</name>
        <dbReference type="ChEBI" id="CHEBI:18420"/>
    </cofactor>
</comment>
<comment type="cofactor">
    <cofactor evidence="1 2 3 4">
        <name>FMN</name>
        <dbReference type="ChEBI" id="CHEBI:58210"/>
    </cofactor>
    <text evidence="1 2">Binds 1 FMN per subunit.</text>
</comment>
<comment type="pathway">
    <text evidence="1 3">Cofactor biosynthesis; coenzyme A biosynthesis; CoA from (R)-pantothenate: step 2/5.</text>
</comment>
<comment type="pathway">
    <text evidence="1 2">Cofactor biosynthesis; coenzyme A biosynthesis; CoA from (R)-pantothenate: step 3/5.</text>
</comment>
<comment type="subunit">
    <text evidence="2 4 5">Homododecamer (PubMed:10922366, PubMed:11358972). The CoaC domain is responsible for dodecamer formation (PubMed:11358972). The CoaB domain forms homodimers (PubMed:12140293).</text>
</comment>
<comment type="interaction">
    <interactant intactId="EBI-548929">
        <id>P0ABQ0</id>
    </interactant>
    <interactant intactId="EBI-543771">
        <id>P0A7L0</id>
        <label>rplA</label>
    </interactant>
    <organismsDiffer>false</organismsDiffer>
    <experiments>2</experiments>
</comment>
<comment type="interaction">
    <interactant intactId="EBI-548929">
        <id>P0ABQ0</id>
    </interactant>
    <interactant intactId="EBI-544985">
        <id>P0A7Z4</id>
        <label>rpoA</label>
    </interactant>
    <organismsDiffer>false</organismsDiffer>
    <experiments>2</experiments>
</comment>
<comment type="similarity">
    <text evidence="1 10">In the N-terminal section; belongs to the HFCD (homo-oligomeric flavin containing Cys decarboxylase) superfamily.</text>
</comment>
<comment type="similarity">
    <text evidence="1 10">In the C-terminal section; belongs to the PPC synthetase family.</text>
</comment>
<comment type="sequence caution" evidence="10">
    <conflict type="erroneous initiation">
        <sequence resource="EMBL-CDS" id="AAA61992"/>
    </conflict>
    <text>Extended N-terminus.</text>
</comment>
<reference key="1">
    <citation type="journal article" date="1993" name="Genomics">
        <title>DNA sequence and analysis of 136 kilobases of the Escherichia coli genome: organizational symmetry around the origin of replication.</title>
        <authorList>
            <person name="Burland V.D."/>
            <person name="Plunkett G. III"/>
            <person name="Daniels D.L."/>
            <person name="Blattner F.R."/>
        </authorList>
    </citation>
    <scope>NUCLEOTIDE SEQUENCE [LARGE SCALE GENOMIC DNA]</scope>
    <source>
        <strain>K12 / MG1655 / ATCC 47076</strain>
    </source>
</reference>
<reference key="2">
    <citation type="journal article" date="1997" name="Science">
        <title>The complete genome sequence of Escherichia coli K-12.</title>
        <authorList>
            <person name="Blattner F.R."/>
            <person name="Plunkett G. III"/>
            <person name="Bloch C.A."/>
            <person name="Perna N.T."/>
            <person name="Burland V."/>
            <person name="Riley M."/>
            <person name="Collado-Vides J."/>
            <person name="Glasner J.D."/>
            <person name="Rode C.K."/>
            <person name="Mayhew G.F."/>
            <person name="Gregor J."/>
            <person name="Davis N.W."/>
            <person name="Kirkpatrick H.A."/>
            <person name="Goeden M.A."/>
            <person name="Rose D.J."/>
            <person name="Mau B."/>
            <person name="Shao Y."/>
        </authorList>
    </citation>
    <scope>NUCLEOTIDE SEQUENCE [LARGE SCALE GENOMIC DNA]</scope>
    <source>
        <strain>K12 / MG1655 / ATCC 47076</strain>
    </source>
</reference>
<reference key="3">
    <citation type="journal article" date="2006" name="Mol. Syst. Biol.">
        <title>Highly accurate genome sequences of Escherichia coli K-12 strains MG1655 and W3110.</title>
        <authorList>
            <person name="Hayashi K."/>
            <person name="Morooka N."/>
            <person name="Yamamoto Y."/>
            <person name="Fujita K."/>
            <person name="Isono K."/>
            <person name="Choi S."/>
            <person name="Ohtsubo E."/>
            <person name="Baba T."/>
            <person name="Wanner B.L."/>
            <person name="Mori H."/>
            <person name="Horiuchi T."/>
        </authorList>
    </citation>
    <scope>NUCLEOTIDE SEQUENCE [LARGE SCALE GENOMIC DNA]</scope>
    <source>
        <strain>K12 / W3110 / ATCC 27325 / DSM 5911</strain>
    </source>
</reference>
<reference key="4">
    <citation type="journal article" date="2000" name="J. Biol. Chem.">
        <title>Molecular characterization of lantibiotic-synthesizing enzyme EpiD reveals a function for bacterial Dfp proteins in coenzyme A biosynthesis.</title>
        <authorList>
            <person name="Kupke T."/>
            <person name="Uebele M."/>
            <person name="Schmid D."/>
            <person name="Jung G."/>
            <person name="Blaesse M."/>
            <person name="Steinbacher S."/>
        </authorList>
    </citation>
    <scope>PROTEIN SEQUENCE OF 2-11</scope>
    <scope>CHARACTERIZATION OF COAC ACTIVITY</scope>
    <scope>COFACTOR</scope>
    <scope>SUBUNIT</scope>
    <scope>PATHWAY</scope>
    <scope>MUTAGENESIS OF PHE-46; HIS-75; PRO-89; THR-91; MET-124; ASN-125 AND MET-128</scope>
</reference>
<reference key="5">
    <citation type="journal article" date="1983" name="EMBO J.">
        <title>Nucleotide sequence of the structural gene for dUTPase of Escherichia coli K-12.</title>
        <authorList>
            <person name="Lundberg L.G."/>
            <person name="Thoresson H.-O."/>
            <person name="Karlstroem O.H."/>
            <person name="Nyman P.O."/>
        </authorList>
    </citation>
    <scope>NUCLEOTIDE SEQUENCE [GENOMIC DNA] OF 288-406</scope>
    <source>
        <strain>K12</strain>
    </source>
</reference>
<reference key="6">
    <citation type="journal article" date="2001" name="J. Biol. Chem.">
        <title>Phosphopantothenoylcysteine synthetase from Escherichia coli. Identification and characterization of the last unidentified coenzyme A biosynthetic enzyme in bacteria.</title>
        <authorList>
            <person name="Strauss E."/>
            <person name="Kinsland C."/>
            <person name="Ge Y."/>
            <person name="McLafferty F.W."/>
            <person name="Begley T.P."/>
        </authorList>
    </citation>
    <scope>CHARACTERIZATION OF COAB ACTIVITY</scope>
    <scope>COFACTOR</scope>
    <scope>PATHWAY</scope>
</reference>
<reference key="7">
    <citation type="journal article" date="2001" name="J. Biol. Chem.">
        <title>Molecular characterization of the 4'-phosphopantothenoylcysteine decarboxylase domain of bacterial Dfp flavoproteins.</title>
        <authorList>
            <person name="Kupke T."/>
        </authorList>
    </citation>
    <scope>CHARACTERIZATION OF COAC ACTIVITY</scope>
    <scope>COFACTOR</scope>
    <scope>SUBUNIT</scope>
    <scope>MUTAGENESIS OF GLY-11; GLY-14; GLY-15; ILE-16; ALA-17; TYR-19; LYS-20 AND ASN-125</scope>
</reference>
<reference key="8">
    <citation type="journal article" date="2002" name="J. Biol. Chem.">
        <title>Molecular characterization of the 4'-phosphopantothenoylcysteine synthetase domain of bacterial dfp flavoproteins.</title>
        <authorList>
            <person name="Kupke T."/>
        </authorList>
    </citation>
    <scope>CHARACTERIZATION OF COAB ACTIVITY</scope>
    <scope>SUBUNIT</scope>
    <scope>MUTAGENESIS OF THR-194; THR-198; ASP-203; ASN-210; SER-212; LYS-215; ALA-275; LYS-289; LYS-291 AND LYS-292</scope>
</reference>
<reference key="9">
    <citation type="journal article" date="2004" name="Eur. J. Biochem.">
        <title>Active-site residues and amino acid specificity of the bacterial 4'-phosphopantothenoylcysteine synthetase CoaB.</title>
        <authorList>
            <person name="Kupke T."/>
        </authorList>
    </citation>
    <scope>CHARACTERIZATION OF COAB ACTIVITY</scope>
    <scope>MUTAGENESIS OF ASN-210 AND ALA-275</scope>
</reference>
<reference evidence="12 13 14 15" key="10">
    <citation type="journal article" date="2004" name="Structure">
        <title>Structural basis of CTP-dependent peptide bond formation in coenzyme A biosynthesis catalyzed by Escherichia coli PPC synthetase.</title>
        <authorList>
            <person name="Stanitzek S."/>
            <person name="Augustin M.A."/>
            <person name="Huber R."/>
            <person name="Kupke T."/>
            <person name="Steinbacher S."/>
        </authorList>
    </citation>
    <scope>X-RAY CRYSTALLOGRAPHY (2.3 ANGSTROMS) OF 181-406 OF MUTANT ASP-210 APOENZYME AND OF COMPLEX WITH SUBSTRATE; CTP AND CALCIUM IONS</scope>
</reference>
<proteinExistence type="evidence at protein level"/>
<protein>
    <recommendedName>
        <fullName evidence="1 10">Coenzyme A biosynthesis bifunctional protein CoaBC</fullName>
    </recommendedName>
    <alternativeName>
        <fullName evidence="1 10">DNA/pantothenate metabolism flavoprotein</fullName>
    </alternativeName>
    <alternativeName>
        <fullName evidence="1">Phosphopantothenoylcysteine synthetase/decarboxylase</fullName>
        <shortName evidence="1">PPCS-PPCDC</shortName>
    </alternativeName>
    <domain>
        <recommendedName>
            <fullName evidence="1 8">Phosphopantothenoylcysteine decarboxylase</fullName>
            <shortName evidence="1 8">PPC decarboxylase</shortName>
            <shortName evidence="1 9">PPC-DC</shortName>
            <ecNumber evidence="1 2 4">4.1.1.36</ecNumber>
        </recommendedName>
        <alternativeName>
            <fullName evidence="1 9">CoaC</fullName>
        </alternativeName>
    </domain>
    <domain>
        <recommendedName>
            <fullName evidence="1 10">Phosphopantothenate--cysteine ligase</fullName>
            <ecNumber evidence="1 3 5 6">6.3.2.5</ecNumber>
        </recommendedName>
        <alternativeName>
            <fullName evidence="1 9">CoaB</fullName>
        </alternativeName>
        <alternativeName>
            <fullName evidence="1 9">Phosphopantothenoylcysteine synthetase</fullName>
            <shortName evidence="1">PPC synthetase</shortName>
            <shortName evidence="1 9">PPC-S</shortName>
        </alternativeName>
    </domain>
</protein>
<sequence length="406" mass="43438">MSLAGKKIVLGVSGGIAAYKTPELVRRLRDRGADVRVAMTEAAKAFITPLSLQAVSGYPVSDSLLDPAAEAAMGHIELGKWADLVILAPATADLIARVAAGMANDLVSTICLATPAPVAVLPAMNQQMYRAAATQHNLEVLASRGLLIWGPDSGSQACGDIGPGRMLDPLTIVDMAVAHFSPVNDLKHLNIMITAGPTREPLDPVRYISNHSSGKMGFAIAAAAARRGANVTLVSGPVSLPTPPFVKRVDVMTALEMEAAVNASVQQQNIFIGCAAVADYRAATVAPEKIKKQATQGDELTIKMVKNPDIVAGVAALKDHRPYVVGFAAETNNVEEYARQKRIRKNLDLICANDVSQPTQGFNSDNNALHLFWQDGDKVLPLERKELLGQLLLDEIVTRYDEKNRR</sequence>
<organism>
    <name type="scientific">Escherichia coli (strain K12)</name>
    <dbReference type="NCBI Taxonomy" id="83333"/>
    <lineage>
        <taxon>Bacteria</taxon>
        <taxon>Pseudomonadati</taxon>
        <taxon>Pseudomonadota</taxon>
        <taxon>Gammaproteobacteria</taxon>
        <taxon>Enterobacterales</taxon>
        <taxon>Enterobacteriaceae</taxon>
        <taxon>Escherichia</taxon>
    </lineage>
</organism>
<accession>P0ABQ0</accession>
<accession>P24285</accession>
<accession>P76718</accession>
<accession>Q2M7V3</accession>
<keyword id="KW-0002">3D-structure</keyword>
<keyword id="KW-0210">Decarboxylase</keyword>
<keyword id="KW-0903">Direct protein sequencing</keyword>
<keyword id="KW-0285">Flavoprotein</keyword>
<keyword id="KW-0288">FMN</keyword>
<keyword id="KW-0436">Ligase</keyword>
<keyword id="KW-0456">Lyase</keyword>
<keyword id="KW-0460">Magnesium</keyword>
<keyword id="KW-0479">Metal-binding</keyword>
<keyword id="KW-0511">Multifunctional enzyme</keyword>
<keyword id="KW-1185">Reference proteome</keyword>
<name>COABC_ECOLI</name>
<evidence type="ECO:0000255" key="1">
    <source>
        <dbReference type="HAMAP-Rule" id="MF_02225"/>
    </source>
</evidence>
<evidence type="ECO:0000269" key="2">
    <source>
    </source>
</evidence>
<evidence type="ECO:0000269" key="3">
    <source>
    </source>
</evidence>
<evidence type="ECO:0000269" key="4">
    <source>
    </source>
</evidence>
<evidence type="ECO:0000269" key="5">
    <source>
    </source>
</evidence>
<evidence type="ECO:0000269" key="6">
    <source>
    </source>
</evidence>
<evidence type="ECO:0000269" key="7">
    <source>
    </source>
</evidence>
<evidence type="ECO:0000303" key="8">
    <source>
    </source>
</evidence>
<evidence type="ECO:0000303" key="9">
    <source>
    </source>
</evidence>
<evidence type="ECO:0000305" key="10"/>
<evidence type="ECO:0000305" key="11">
    <source>
    </source>
</evidence>
<evidence type="ECO:0007744" key="12">
    <source>
        <dbReference type="PDB" id="1U7U"/>
    </source>
</evidence>
<evidence type="ECO:0007744" key="13">
    <source>
        <dbReference type="PDB" id="1U7W"/>
    </source>
</evidence>
<evidence type="ECO:0007744" key="14">
    <source>
        <dbReference type="PDB" id="1U7Z"/>
    </source>
</evidence>
<evidence type="ECO:0007744" key="15">
    <source>
        <dbReference type="PDB" id="1U80"/>
    </source>
</evidence>
<evidence type="ECO:0007829" key="16">
    <source>
        <dbReference type="PDB" id="1U7Z"/>
    </source>
</evidence>
<feature type="initiator methionine" description="Removed" evidence="2">
    <location>
        <position position="1"/>
    </location>
</feature>
<feature type="chain" id="PRO_0000182022" description="Coenzyme A biosynthesis bifunctional protein CoaBC">
    <location>
        <begin position="2"/>
        <end position="406"/>
    </location>
</feature>
<feature type="region of interest" description="Phosphopantothenoylcysteine decarboxylase" evidence="1 11">
    <location>
        <begin position="2"/>
        <end position="190"/>
    </location>
</feature>
<feature type="region of interest" description="Phosphopantothenate--cysteine ligase" evidence="1 11">
    <location>
        <begin position="191"/>
        <end position="406"/>
    </location>
</feature>
<feature type="active site" description="Proton donor" evidence="1 10">
    <location>
        <position position="158"/>
    </location>
</feature>
<feature type="binding site" evidence="1 7 13">
    <location>
        <begin position="273"/>
        <end position="275"/>
    </location>
    <ligand>
        <name>CTP</name>
        <dbReference type="ChEBI" id="CHEBI:37563"/>
    </ligand>
</feature>
<feature type="binding site" evidence="1 7 13">
    <location>
        <position position="279"/>
    </location>
    <ligand>
        <name>CTP</name>
        <dbReference type="ChEBI" id="CHEBI:37563"/>
    </ligand>
</feature>
<feature type="binding site" evidence="1 7 13">
    <location>
        <position position="289"/>
    </location>
    <ligand>
        <name>CTP</name>
        <dbReference type="ChEBI" id="CHEBI:37563"/>
    </ligand>
</feature>
<feature type="binding site" evidence="1 7 13">
    <location>
        <begin position="308"/>
        <end position="311"/>
    </location>
    <ligand>
        <name>CTP</name>
        <dbReference type="ChEBI" id="CHEBI:37563"/>
    </ligand>
</feature>
<feature type="binding site" evidence="1 7 13">
    <location>
        <position position="327"/>
    </location>
    <ligand>
        <name>CTP</name>
        <dbReference type="ChEBI" id="CHEBI:37563"/>
    </ligand>
</feature>
<feature type="binding site" evidence="1 7 13">
    <location>
        <position position="341"/>
    </location>
    <ligand>
        <name>CTP</name>
        <dbReference type="ChEBI" id="CHEBI:37563"/>
    </ligand>
</feature>
<feature type="binding site" evidence="1 7 13">
    <location>
        <position position="345"/>
    </location>
    <ligand>
        <name>CTP</name>
        <dbReference type="ChEBI" id="CHEBI:37563"/>
    </ligand>
</feature>
<feature type="mutagenesis site" description="In Dfp-707; temperature-sensitive, impairs folding." evidence="4">
    <original>G</original>
    <variation>D</variation>
    <location>
        <position position="11"/>
    </location>
</feature>
<feature type="mutagenesis site" description="No FMN binding." evidence="4">
    <original>G</original>
    <variation>S</variation>
    <location>
        <position position="14"/>
    </location>
</feature>
<feature type="mutagenesis site" description="Less than 5% of wild-type activity." evidence="4">
    <original>G</original>
    <variation>A</variation>
    <location>
        <position position="15"/>
    </location>
</feature>
<feature type="mutagenesis site" description="Severely reduced activity." evidence="4">
    <original>I</original>
    <variation>L</variation>
    <location>
        <position position="16"/>
    </location>
</feature>
<feature type="mutagenesis site" description="Slightly reduced activity." evidence="4">
    <original>I</original>
    <variation>V</variation>
    <location>
        <position position="16"/>
    </location>
</feature>
<feature type="mutagenesis site" description="Less than 5% of wild-type activity." evidence="4">
    <original>A</original>
    <variation>D</variation>
    <location>
        <position position="17"/>
    </location>
</feature>
<feature type="mutagenesis site" description="Almost wild-type activity." evidence="4">
    <original>A</original>
    <variation>G</variation>
    <variation>S</variation>
    <location>
        <position position="17"/>
    </location>
</feature>
<feature type="mutagenesis site" description="Almost wild-type activity." evidence="4">
    <original>Y</original>
    <variation>F</variation>
    <location>
        <position position="19"/>
    </location>
</feature>
<feature type="mutagenesis site" description="Reduced activity." evidence="4">
    <original>Y</original>
    <variation>L</variation>
    <location>
        <position position="19"/>
    </location>
</feature>
<feature type="mutagenesis site" description="Reduced activity." evidence="4">
    <original>K</original>
    <variation>N</variation>
    <variation>Q</variation>
    <location>
        <position position="20"/>
    </location>
</feature>
<feature type="mutagenesis site" description="Almost wild-type activity." evidence="4">
    <original>K</original>
    <variation>R</variation>
    <location>
        <position position="20"/>
    </location>
</feature>
<feature type="mutagenesis site" description="Reduced activity." evidence="2">
    <original>F</original>
    <variation>L</variation>
    <location>
        <position position="46"/>
    </location>
</feature>
<feature type="mutagenesis site" description="Loss of activity." evidence="2">
    <original>H</original>
    <variation>N</variation>
    <location>
        <position position="75"/>
    </location>
</feature>
<feature type="mutagenesis site" description="Binds FMN, but more loosely than wild-type." evidence="2">
    <original>P</original>
    <variation>A</variation>
    <location>
        <position position="89"/>
    </location>
</feature>
<feature type="mutagenesis site" description="No FMN binding." evidence="2">
    <original>P</original>
    <variation>D</variation>
    <location>
        <position position="89"/>
    </location>
</feature>
<feature type="mutagenesis site" description="Binds FMN." evidence="2">
    <original>T</original>
    <variation>V</variation>
    <location>
        <position position="91"/>
    </location>
</feature>
<feature type="mutagenesis site" description="No effect." evidence="2">
    <original>M</original>
    <variation>L</variation>
    <location>
        <position position="124"/>
    </location>
</feature>
<feature type="mutagenesis site" description="Loss of activity." evidence="2 4">
    <original>N</original>
    <variation>D</variation>
    <variation>Q</variation>
    <location>
        <position position="125"/>
    </location>
</feature>
<feature type="mutagenesis site" description="Severely reduced activity." evidence="2">
    <original>M</original>
    <variation>L</variation>
    <location>
        <position position="128"/>
    </location>
</feature>
<feature type="mutagenesis site" description="Loss of activity.">
    <original>C</original>
    <variation>A</variation>
    <variation>S</variation>
    <location>
        <position position="158"/>
    </location>
</feature>
<feature type="mutagenesis site" description="Loss of dimerization." evidence="5">
    <original>T</original>
    <variation>V</variation>
    <location>
        <position position="194"/>
    </location>
</feature>
<feature type="mutagenesis site" description="Loss of dimerization." evidence="5">
    <original>T</original>
    <variation>V</variation>
    <location>
        <position position="198"/>
    </location>
</feature>
<feature type="mutagenesis site" description="Loss of dimerization." evidence="5">
    <original>D</original>
    <variation>N</variation>
    <location>
        <position position="203"/>
    </location>
</feature>
<feature type="mutagenesis site" description="Loss of activity, reaction intermediate detectable." evidence="5 6">
    <original>N</original>
    <variation>D</variation>
    <location>
        <position position="210"/>
    </location>
</feature>
<feature type="mutagenesis site" description="Loss of activity, reaction intermediate not detectable." evidence="5 6">
    <original>N</original>
    <variation>H</variation>
    <variation>K</variation>
    <location>
        <position position="210"/>
    </location>
</feature>
<feature type="mutagenesis site" description="Small effect on activity." evidence="5">
    <original>S</original>
    <variation>A</variation>
    <location>
        <position position="212"/>
    </location>
</feature>
<feature type="mutagenesis site" description="No effect." evidence="5">
    <original>K</original>
    <variation>Q</variation>
    <location>
        <position position="215"/>
    </location>
</feature>
<feature type="mutagenesis site" description="Loss of dimerization." evidence="5 6">
    <original>A</original>
    <variation>V</variation>
    <location>
        <position position="275"/>
    </location>
</feature>
<feature type="mutagenesis site" description="Loss of activity." evidence="5">
    <original>K</original>
    <variation>Q</variation>
    <location>
        <position position="289"/>
    </location>
</feature>
<feature type="mutagenesis site" description="Reduced activity." evidence="5">
    <original>K</original>
    <variation>Q</variation>
    <location>
        <position position="291"/>
    </location>
</feature>
<feature type="mutagenesis site" description="Small effect on activity." evidence="5">
    <original>K</original>
    <variation>Q</variation>
    <location>
        <position position="292"/>
    </location>
</feature>
<feature type="turn" evidence="16">
    <location>
        <begin position="185"/>
        <end position="188"/>
    </location>
</feature>
<feature type="strand" evidence="16">
    <location>
        <begin position="190"/>
        <end position="197"/>
    </location>
</feature>
<feature type="strand" evidence="16">
    <location>
        <begin position="199"/>
        <end position="210"/>
    </location>
</feature>
<feature type="helix" evidence="16">
    <location>
        <begin position="215"/>
        <end position="226"/>
    </location>
</feature>
<feature type="strand" evidence="16">
    <location>
        <begin position="230"/>
        <end position="235"/>
    </location>
</feature>
<feature type="strand" evidence="16">
    <location>
        <begin position="246"/>
        <end position="250"/>
    </location>
</feature>
<feature type="helix" evidence="16">
    <location>
        <begin position="254"/>
        <end position="264"/>
    </location>
</feature>
<feature type="helix" evidence="16">
    <location>
        <begin position="265"/>
        <end position="267"/>
    </location>
</feature>
<feature type="strand" evidence="16">
    <location>
        <begin position="269"/>
        <end position="273"/>
    </location>
</feature>
<feature type="strand" evidence="16">
    <location>
        <begin position="279"/>
        <end position="284"/>
    </location>
</feature>
<feature type="strand" evidence="16">
    <location>
        <begin position="299"/>
        <end position="306"/>
    </location>
</feature>
<feature type="helix" evidence="16">
    <location>
        <begin position="310"/>
        <end position="316"/>
    </location>
</feature>
<feature type="strand" evidence="16">
    <location>
        <begin position="318"/>
        <end position="320"/>
    </location>
</feature>
<feature type="strand" evidence="16">
    <location>
        <begin position="323"/>
        <end position="333"/>
    </location>
</feature>
<feature type="helix" evidence="16">
    <location>
        <begin position="334"/>
        <end position="345"/>
    </location>
</feature>
<feature type="strand" evidence="16">
    <location>
        <begin position="348"/>
        <end position="354"/>
    </location>
</feature>
<feature type="strand" evidence="16">
    <location>
        <begin position="364"/>
        <end position="373"/>
    </location>
</feature>
<feature type="strand" evidence="16">
    <location>
        <begin position="376"/>
        <end position="384"/>
    </location>
</feature>
<feature type="helix" evidence="16">
    <location>
        <begin position="385"/>
        <end position="403"/>
    </location>
</feature>
<dbReference type="EC" id="4.1.1.36" evidence="1 2 4"/>
<dbReference type="EC" id="6.3.2.5" evidence="1 3 5 6"/>
<dbReference type="EMBL" id="L10328">
    <property type="protein sequence ID" value="AAA61992.1"/>
    <property type="status" value="ALT_INIT"/>
    <property type="molecule type" value="Genomic_DNA"/>
</dbReference>
<dbReference type="EMBL" id="U00096">
    <property type="protein sequence ID" value="AAC76663.2"/>
    <property type="molecule type" value="Genomic_DNA"/>
</dbReference>
<dbReference type="EMBL" id="AP009048">
    <property type="protein sequence ID" value="BAE77653.1"/>
    <property type="molecule type" value="Genomic_DNA"/>
</dbReference>
<dbReference type="EMBL" id="V01578">
    <property type="status" value="NOT_ANNOTATED_CDS"/>
    <property type="molecule type" value="Genomic_DNA"/>
</dbReference>
<dbReference type="RefSeq" id="NP_418096.4">
    <property type="nucleotide sequence ID" value="NC_000913.3"/>
</dbReference>
<dbReference type="RefSeq" id="WP_000050139.1">
    <property type="nucleotide sequence ID" value="NZ_SSZK01000022.1"/>
</dbReference>
<dbReference type="PDB" id="1U7U">
    <property type="method" value="X-ray"/>
    <property type="resolution" value="2.40 A"/>
    <property type="chains" value="A=181-406"/>
</dbReference>
<dbReference type="PDB" id="1U7W">
    <property type="method" value="X-ray"/>
    <property type="resolution" value="2.50 A"/>
    <property type="chains" value="A/B/C=181-406"/>
</dbReference>
<dbReference type="PDB" id="1U7Z">
    <property type="method" value="X-ray"/>
    <property type="resolution" value="2.30 A"/>
    <property type="chains" value="A/B/C=181-406"/>
</dbReference>
<dbReference type="PDB" id="1U80">
    <property type="method" value="X-ray"/>
    <property type="resolution" value="2.85 A"/>
    <property type="chains" value="A/B/C=181-406"/>
</dbReference>
<dbReference type="PDBsum" id="1U7U"/>
<dbReference type="PDBsum" id="1U7W"/>
<dbReference type="PDBsum" id="1U7Z"/>
<dbReference type="PDBsum" id="1U80"/>
<dbReference type="SMR" id="P0ABQ0"/>
<dbReference type="BioGRID" id="4261256">
    <property type="interactions" value="30"/>
</dbReference>
<dbReference type="DIP" id="DIP-48472N"/>
<dbReference type="FunCoup" id="P0ABQ0">
    <property type="interactions" value="818"/>
</dbReference>
<dbReference type="IntAct" id="P0ABQ0">
    <property type="interactions" value="2"/>
</dbReference>
<dbReference type="STRING" id="511145.b3639"/>
<dbReference type="DrugBank" id="DB03403">
    <property type="generic name" value="Cytidine-5'-Monophosphate"/>
</dbReference>
<dbReference type="DrugBank" id="DB02431">
    <property type="generic name" value="Cytidine-5'-Triphosphate"/>
</dbReference>
<dbReference type="jPOST" id="P0ABQ0"/>
<dbReference type="PaxDb" id="511145-b3639"/>
<dbReference type="EnsemblBacteria" id="AAC76663">
    <property type="protein sequence ID" value="AAC76663"/>
    <property type="gene ID" value="b3639"/>
</dbReference>
<dbReference type="GeneID" id="949047"/>
<dbReference type="KEGG" id="ecj:JW5642"/>
<dbReference type="KEGG" id="eco:b3639"/>
<dbReference type="KEGG" id="ecoc:C3026_19720"/>
<dbReference type="PATRIC" id="fig|1411691.4.peg.3067"/>
<dbReference type="EchoBASE" id="EB0004"/>
<dbReference type="eggNOG" id="COG0452">
    <property type="taxonomic scope" value="Bacteria"/>
</dbReference>
<dbReference type="HOGENOM" id="CLU_033319_0_1_6"/>
<dbReference type="InParanoid" id="P0ABQ0"/>
<dbReference type="OMA" id="AMNVNMY"/>
<dbReference type="OrthoDB" id="9802554at2"/>
<dbReference type="PhylomeDB" id="P0ABQ0"/>
<dbReference type="BioCyc" id="EcoCyc:EG10004-MONOMER"/>
<dbReference type="BioCyc" id="MetaCyc:EG10004-MONOMER"/>
<dbReference type="BRENDA" id="6.3.2.5">
    <property type="organism ID" value="2026"/>
</dbReference>
<dbReference type="SABIO-RK" id="P0ABQ0"/>
<dbReference type="UniPathway" id="UPA00241">
    <property type="reaction ID" value="UER00353"/>
</dbReference>
<dbReference type="UniPathway" id="UPA00241">
    <property type="reaction ID" value="UER00354"/>
</dbReference>
<dbReference type="EvolutionaryTrace" id="P0ABQ0"/>
<dbReference type="PRO" id="PR:P0ABQ0"/>
<dbReference type="Proteomes" id="UP000000625">
    <property type="component" value="Chromosome"/>
</dbReference>
<dbReference type="GO" id="GO:0005829">
    <property type="term" value="C:cytosol"/>
    <property type="evidence" value="ECO:0000314"/>
    <property type="project" value="EcoCyc"/>
</dbReference>
<dbReference type="GO" id="GO:0071513">
    <property type="term" value="C:phosphopantothenoylcysteine decarboxylase complex"/>
    <property type="evidence" value="ECO:0000318"/>
    <property type="project" value="GO_Central"/>
</dbReference>
<dbReference type="GO" id="GO:0010181">
    <property type="term" value="F:FMN binding"/>
    <property type="evidence" value="ECO:0000314"/>
    <property type="project" value="EcoCyc"/>
</dbReference>
<dbReference type="GO" id="GO:0042802">
    <property type="term" value="F:identical protein binding"/>
    <property type="evidence" value="ECO:0000314"/>
    <property type="project" value="EcoCyc"/>
</dbReference>
<dbReference type="GO" id="GO:0046872">
    <property type="term" value="F:metal ion binding"/>
    <property type="evidence" value="ECO:0007669"/>
    <property type="project" value="UniProtKB-KW"/>
</dbReference>
<dbReference type="GO" id="GO:0004632">
    <property type="term" value="F:phosphopantothenate--cysteine ligase activity"/>
    <property type="evidence" value="ECO:0000314"/>
    <property type="project" value="EcoCyc"/>
</dbReference>
<dbReference type="GO" id="GO:0004633">
    <property type="term" value="F:phosphopantothenoylcysteine decarboxylase activity"/>
    <property type="evidence" value="ECO:0000314"/>
    <property type="project" value="EcoCyc"/>
</dbReference>
<dbReference type="GO" id="GO:0015937">
    <property type="term" value="P:coenzyme A biosynthetic process"/>
    <property type="evidence" value="ECO:0000314"/>
    <property type="project" value="EcoCyc"/>
</dbReference>
<dbReference type="GO" id="GO:0015941">
    <property type="term" value="P:pantothenate catabolic process"/>
    <property type="evidence" value="ECO:0007669"/>
    <property type="project" value="InterPro"/>
</dbReference>
<dbReference type="FunFam" id="3.40.50.10300:FF:000001">
    <property type="entry name" value="Coenzyme A biosynthesis bifunctional protein CoaBC"/>
    <property type="match status" value="1"/>
</dbReference>
<dbReference type="FunFam" id="3.40.50.1950:FF:000002">
    <property type="entry name" value="Coenzyme A biosynthesis bifunctional protein CoaBC"/>
    <property type="match status" value="1"/>
</dbReference>
<dbReference type="Gene3D" id="3.40.50.10300">
    <property type="entry name" value="CoaB-like"/>
    <property type="match status" value="1"/>
</dbReference>
<dbReference type="Gene3D" id="3.40.50.1950">
    <property type="entry name" value="Flavin prenyltransferase-like"/>
    <property type="match status" value="1"/>
</dbReference>
<dbReference type="HAMAP" id="MF_02225">
    <property type="entry name" value="CoaBC"/>
    <property type="match status" value="1"/>
</dbReference>
<dbReference type="InterPro" id="IPR035929">
    <property type="entry name" value="CoaB-like_sf"/>
</dbReference>
<dbReference type="InterPro" id="IPR005252">
    <property type="entry name" value="CoaBC"/>
</dbReference>
<dbReference type="InterPro" id="IPR007085">
    <property type="entry name" value="DNA/pantothenate-metab_flavo_C"/>
</dbReference>
<dbReference type="InterPro" id="IPR036551">
    <property type="entry name" value="Flavin_trans-like"/>
</dbReference>
<dbReference type="InterPro" id="IPR003382">
    <property type="entry name" value="Flavoprotein"/>
</dbReference>
<dbReference type="NCBIfam" id="TIGR00521">
    <property type="entry name" value="coaBC_dfp"/>
    <property type="match status" value="1"/>
</dbReference>
<dbReference type="PANTHER" id="PTHR14359">
    <property type="entry name" value="HOMO-OLIGOMERIC FLAVIN CONTAINING CYS DECARBOXYLASE FAMILY"/>
    <property type="match status" value="1"/>
</dbReference>
<dbReference type="PANTHER" id="PTHR14359:SF6">
    <property type="entry name" value="PHOSPHOPANTOTHENOYLCYSTEINE DECARBOXYLASE"/>
    <property type="match status" value="1"/>
</dbReference>
<dbReference type="Pfam" id="PF04127">
    <property type="entry name" value="DFP"/>
    <property type="match status" value="1"/>
</dbReference>
<dbReference type="Pfam" id="PF02441">
    <property type="entry name" value="Flavoprotein"/>
    <property type="match status" value="1"/>
</dbReference>
<dbReference type="SUPFAM" id="SSF102645">
    <property type="entry name" value="CoaB-like"/>
    <property type="match status" value="1"/>
</dbReference>
<dbReference type="SUPFAM" id="SSF52507">
    <property type="entry name" value="Homo-oligomeric flavin-containing Cys decarboxylases, HFCD"/>
    <property type="match status" value="1"/>
</dbReference>